<evidence type="ECO:0000250" key="1"/>
<evidence type="ECO:0000255" key="2">
    <source>
        <dbReference type="PROSITE-ProRule" id="PRU00303"/>
    </source>
</evidence>
<evidence type="ECO:0000305" key="3"/>
<feature type="signal peptide" evidence="2">
    <location>
        <begin position="1"/>
        <end position="21"/>
    </location>
</feature>
<feature type="peptide" id="PRO_0000043193" description="Entericidin B">
    <location>
        <begin position="22"/>
        <end position="48"/>
    </location>
</feature>
<feature type="lipid moiety-binding region" description="N-palmitoyl cysteine" evidence="3">
    <location>
        <position position="22"/>
    </location>
</feature>
<feature type="lipid moiety-binding region" description="S-diacylglycerol cysteine" evidence="3">
    <location>
        <position position="22"/>
    </location>
</feature>
<comment type="function">
    <text evidence="1">Plays a role in the bacteriolysis. Is activated under conditions of high osmolarity by the factor sigma S. Entericidin A functions as an antidote (By similarity).</text>
</comment>
<comment type="subcellular location">
    <subcellularLocation>
        <location evidence="2">Cell membrane</location>
        <topology evidence="2">Lipid-anchor</topology>
    </subcellularLocation>
</comment>
<comment type="similarity">
    <text evidence="3">Belongs to the EcnA/EcnB lipoprotein family.</text>
</comment>
<accession>P0ADB8</accession>
<accession>P56549</accession>
<sequence>MVKKTIAAIFSVLVLSTVLTACNTTRGVGEDISDGGNAISGAATKAQQ</sequence>
<proteinExistence type="inferred from homology"/>
<reference key="1">
    <citation type="journal article" date="2002" name="Proc. Natl. Acad. Sci. U.S.A.">
        <title>Extensive mosaic structure revealed by the complete genome sequence of uropathogenic Escherichia coli.</title>
        <authorList>
            <person name="Welch R.A."/>
            <person name="Burland V."/>
            <person name="Plunkett G. III"/>
            <person name="Redford P."/>
            <person name="Roesch P."/>
            <person name="Rasko D."/>
            <person name="Buckles E.L."/>
            <person name="Liou S.-R."/>
            <person name="Boutin A."/>
            <person name="Hackett J."/>
            <person name="Stroud D."/>
            <person name="Mayhew G.F."/>
            <person name="Rose D.J."/>
            <person name="Zhou S."/>
            <person name="Schwartz D.C."/>
            <person name="Perna N.T."/>
            <person name="Mobley H.L.T."/>
            <person name="Donnenberg M.S."/>
            <person name="Blattner F.R."/>
        </authorList>
    </citation>
    <scope>NUCLEOTIDE SEQUENCE [LARGE SCALE GENOMIC DNA]</scope>
    <source>
        <strain>CFT073 / ATCC 700928 / UPEC</strain>
    </source>
</reference>
<protein>
    <recommendedName>
        <fullName>Entericidin B</fullName>
    </recommendedName>
</protein>
<organism>
    <name type="scientific">Escherichia coli O6:H1 (strain CFT073 / ATCC 700928 / UPEC)</name>
    <dbReference type="NCBI Taxonomy" id="199310"/>
    <lineage>
        <taxon>Bacteria</taxon>
        <taxon>Pseudomonadati</taxon>
        <taxon>Pseudomonadota</taxon>
        <taxon>Gammaproteobacteria</taxon>
        <taxon>Enterobacterales</taxon>
        <taxon>Enterobacteriaceae</taxon>
        <taxon>Escherichia</taxon>
    </lineage>
</organism>
<keyword id="KW-1003">Cell membrane</keyword>
<keyword id="KW-0449">Lipoprotein</keyword>
<keyword id="KW-0472">Membrane</keyword>
<keyword id="KW-0564">Palmitate</keyword>
<keyword id="KW-1185">Reference proteome</keyword>
<keyword id="KW-0732">Signal</keyword>
<gene>
    <name type="primary">ecnB</name>
    <name type="ordered locus">c5235</name>
</gene>
<name>ECNB_ECOL6</name>
<dbReference type="EMBL" id="AE014075">
    <property type="protein sequence ID" value="AAN83657.1"/>
    <property type="molecule type" value="Genomic_DNA"/>
</dbReference>
<dbReference type="RefSeq" id="WP_000239596.1">
    <property type="nucleotide sequence ID" value="NZ_CP051263.1"/>
</dbReference>
<dbReference type="STRING" id="199310.c5235"/>
<dbReference type="GeneID" id="93777675"/>
<dbReference type="KEGG" id="ecc:c5235"/>
<dbReference type="eggNOG" id="COG5510">
    <property type="taxonomic scope" value="Bacteria"/>
</dbReference>
<dbReference type="HOGENOM" id="CLU_193827_2_0_6"/>
<dbReference type="BioCyc" id="ECOL199310:C5235-MONOMER"/>
<dbReference type="Proteomes" id="UP000001410">
    <property type="component" value="Chromosome"/>
</dbReference>
<dbReference type="GO" id="GO:0005886">
    <property type="term" value="C:plasma membrane"/>
    <property type="evidence" value="ECO:0007669"/>
    <property type="project" value="UniProtKB-SubCell"/>
</dbReference>
<dbReference type="GO" id="GO:0009636">
    <property type="term" value="P:response to toxic substance"/>
    <property type="evidence" value="ECO:0007669"/>
    <property type="project" value="InterPro"/>
</dbReference>
<dbReference type="InterPro" id="IPR012556">
    <property type="entry name" value="Entericidin"/>
</dbReference>
<dbReference type="NCBIfam" id="NF007487">
    <property type="entry name" value="PRK10081.1"/>
    <property type="match status" value="1"/>
</dbReference>
<dbReference type="Pfam" id="PF08085">
    <property type="entry name" value="Entericidin"/>
    <property type="match status" value="1"/>
</dbReference>
<dbReference type="PROSITE" id="PS51257">
    <property type="entry name" value="PROKAR_LIPOPROTEIN"/>
    <property type="match status" value="1"/>
</dbReference>